<proteinExistence type="evidence at transcript level"/>
<organism evidence="7">
    <name type="scientific">Mus musculus castaneus</name>
    <name type="common">Southeastern Asian house mouse</name>
    <dbReference type="NCBI Taxonomy" id="10091"/>
    <lineage>
        <taxon>Eukaryota</taxon>
        <taxon>Metazoa</taxon>
        <taxon>Chordata</taxon>
        <taxon>Craniata</taxon>
        <taxon>Vertebrata</taxon>
        <taxon>Euteleostomi</taxon>
        <taxon>Mammalia</taxon>
        <taxon>Eutheria</taxon>
        <taxon>Euarchontoglires</taxon>
        <taxon>Glires</taxon>
        <taxon>Rodentia</taxon>
        <taxon>Myomorpha</taxon>
        <taxon>Muroidea</taxon>
        <taxon>Muridae</taxon>
        <taxon>Murinae</taxon>
        <taxon>Mus</taxon>
        <taxon>Mus</taxon>
    </lineage>
</organism>
<reference evidence="7" key="1">
    <citation type="journal article" date="2002" name="Pharmacogenetics">
        <title>Sequence variation and phylogenetic history of the mouse Ahr gene.</title>
        <authorList>
            <person name="Thomas R.S."/>
            <person name="Penn S.G."/>
            <person name="Holden K."/>
            <person name="Bradfield C.A."/>
            <person name="Rank D.R."/>
        </authorList>
    </citation>
    <scope>NUCLEOTIDE SEQUENCE [MRNA]</scope>
    <source>
        <strain>CAST/Ei</strain>
    </source>
</reference>
<gene>
    <name type="primary">Ahr</name>
</gene>
<sequence>MSSGANITYASRKRRKPVQKTVKPIPAEGIKSNPSKRHRDRLNTELDRLASLLPFPQDVINKLDKLSVLRLSVSYLRAKSFFDVALKSTPADRNGGQDQCRAQIRDWQDLQEGEFLLQALNGFVLVVTADALVFYASSTIQDYLGFQQSDVIHQSVYELIHTEDRAEFQRQLHWALNPDSAQGVDEAHGPPQAAVYYTPDQLPPENASFMERCFRCRLRCLLDNSSGFLAMNFQGRLKYLHGQNKKGKDGALLPPQLALFAIATPLQPPSILEIRTKNFIFRTKHKLDFTPIGCDAKGQLILGYTEVELCTRGSGYQFIHAADMLHCAESHIRMIKTGESGMTVFRLLAKHSRWRWVQSNARLIYRNGRPDYIIVTQRPLTDEEGREHLQKRSTSLPFMFATGEAVLYEISSPFSPIMDPLPIRTKSNTSRKDWAPQSTPSKDSFHPSSLMSALIQQDESIYLCPPSSPAPLDSHFLMGSVSKCGSWQDSFAAAGSEAALKHEQIGHAQDVNLALSGGPSELFPDNKNNDLYNIMRNLGIDFEDIRSMQNEEFFRTDSTAAGEVDFKDIDITDEILTYMQDSLNNSTLMNSACQQQPVTQHLSCMLQERLQLEQQQQLQQPPPQALEPQQQLCQMVCPQQDLGPKHTQINGTFASWNPTPPVSFNCPQQELKHYQLFSSLQGTAQEFPYKPEVDSVPYTQNFAPCNQPLLPEHSKSVQLDFPGRDFEPSLHPTTSNLDFVSCLQVPENQSHGINSQSAMVSPQAYYAGAMSMYQCQPGPQRTPVDQTQYSSEIPGSQAFLSKVQSRGIFNETYSSDLSSIGHAAQTTGHLHHLAEARPLPDITPGGFL</sequence>
<accession>Q8R4S6</accession>
<name>AHR_MUSMC</name>
<dbReference type="EMBL" id="AF405565">
    <property type="protein sequence ID" value="AAL89730.1"/>
    <property type="molecule type" value="mRNA"/>
</dbReference>
<dbReference type="SMR" id="Q8R4S6"/>
<dbReference type="AGR" id="MGI:105043"/>
<dbReference type="MGI" id="MGI:105043">
    <property type="gene designation" value="Ahr"/>
</dbReference>
<dbReference type="GO" id="GO:0005737">
    <property type="term" value="C:cytoplasm"/>
    <property type="evidence" value="ECO:0000250"/>
    <property type="project" value="UniProtKB"/>
</dbReference>
<dbReference type="GO" id="GO:0034753">
    <property type="term" value="C:nuclear aryl hydrocarbon receptor complex"/>
    <property type="evidence" value="ECO:0000250"/>
    <property type="project" value="UniProtKB"/>
</dbReference>
<dbReference type="GO" id="GO:0005634">
    <property type="term" value="C:nucleus"/>
    <property type="evidence" value="ECO:0000314"/>
    <property type="project" value="UniProt"/>
</dbReference>
<dbReference type="GO" id="GO:0070888">
    <property type="term" value="F:E-box binding"/>
    <property type="evidence" value="ECO:0000250"/>
    <property type="project" value="UniProtKB"/>
</dbReference>
<dbReference type="GO" id="GO:0004879">
    <property type="term" value="F:nuclear receptor activity"/>
    <property type="evidence" value="ECO:0000314"/>
    <property type="project" value="UniProt"/>
</dbReference>
<dbReference type="GO" id="GO:0046982">
    <property type="term" value="F:protein heterodimerization activity"/>
    <property type="evidence" value="ECO:0000250"/>
    <property type="project" value="UniProtKB"/>
</dbReference>
<dbReference type="GO" id="GO:0042803">
    <property type="term" value="F:protein homodimerization activity"/>
    <property type="evidence" value="ECO:0000250"/>
    <property type="project" value="UniProtKB"/>
</dbReference>
<dbReference type="GO" id="GO:1990837">
    <property type="term" value="F:sequence-specific double-stranded DNA binding"/>
    <property type="evidence" value="ECO:0000250"/>
    <property type="project" value="UniProtKB"/>
</dbReference>
<dbReference type="GO" id="GO:1904613">
    <property type="term" value="P:cellular response to 2,3,7,8-tetrachlorodibenzodioxine"/>
    <property type="evidence" value="ECO:0000314"/>
    <property type="project" value="UniProt"/>
</dbReference>
<dbReference type="GO" id="GO:1904682">
    <property type="term" value="P:cellular response to 3-methylcholanthrene"/>
    <property type="evidence" value="ECO:0000250"/>
    <property type="project" value="UniProtKB"/>
</dbReference>
<dbReference type="GO" id="GO:0032922">
    <property type="term" value="P:circadian regulation of gene expression"/>
    <property type="evidence" value="ECO:0000250"/>
    <property type="project" value="UniProtKB"/>
</dbReference>
<dbReference type="GO" id="GO:0045892">
    <property type="term" value="P:negative regulation of DNA-templated transcription"/>
    <property type="evidence" value="ECO:0000250"/>
    <property type="project" value="UniProtKB"/>
</dbReference>
<dbReference type="GO" id="GO:0002841">
    <property type="term" value="P:negative regulation of T cell mediated immune response to tumor cell"/>
    <property type="evidence" value="ECO:0000250"/>
    <property type="project" value="UniProtKB"/>
</dbReference>
<dbReference type="GO" id="GO:0045944">
    <property type="term" value="P:positive regulation of transcription by RNA polymerase II"/>
    <property type="evidence" value="ECO:0000250"/>
    <property type="project" value="UniProtKB"/>
</dbReference>
<dbReference type="GO" id="GO:0002819">
    <property type="term" value="P:regulation of adaptive immune response"/>
    <property type="evidence" value="ECO:0000250"/>
    <property type="project" value="UniProtKB"/>
</dbReference>
<dbReference type="GO" id="GO:0006355">
    <property type="term" value="P:regulation of DNA-templated transcription"/>
    <property type="evidence" value="ECO:0000250"/>
    <property type="project" value="UniProtKB"/>
</dbReference>
<dbReference type="GO" id="GO:0009410">
    <property type="term" value="P:response to xenobiotic stimulus"/>
    <property type="evidence" value="ECO:0000250"/>
    <property type="project" value="UniProtKB"/>
</dbReference>
<dbReference type="GO" id="GO:0006366">
    <property type="term" value="P:transcription by RNA polymerase II"/>
    <property type="evidence" value="ECO:0000250"/>
    <property type="project" value="UniProtKB"/>
</dbReference>
<dbReference type="GO" id="GO:0006805">
    <property type="term" value="P:xenobiotic metabolic process"/>
    <property type="evidence" value="ECO:0007669"/>
    <property type="project" value="InterPro"/>
</dbReference>
<dbReference type="CDD" id="cd11436">
    <property type="entry name" value="bHLH-PAS_AhR"/>
    <property type="match status" value="1"/>
</dbReference>
<dbReference type="CDD" id="cd00130">
    <property type="entry name" value="PAS"/>
    <property type="match status" value="2"/>
</dbReference>
<dbReference type="FunFam" id="3.30.450.20:FF:000035">
    <property type="entry name" value="Aryl hydrocarbon receptor"/>
    <property type="match status" value="1"/>
</dbReference>
<dbReference type="FunFam" id="3.30.450.20:FF:000019">
    <property type="entry name" value="Aryl hydrocarbon receptor 1"/>
    <property type="match status" value="1"/>
</dbReference>
<dbReference type="FunFam" id="4.10.280.10:FF:000024">
    <property type="entry name" value="Aryl hydrocarbon receptor 2"/>
    <property type="match status" value="1"/>
</dbReference>
<dbReference type="Gene3D" id="4.10.280.10">
    <property type="entry name" value="Helix-loop-helix DNA-binding domain"/>
    <property type="match status" value="1"/>
</dbReference>
<dbReference type="Gene3D" id="3.30.450.20">
    <property type="entry name" value="PAS domain"/>
    <property type="match status" value="2"/>
</dbReference>
<dbReference type="InterPro" id="IPR039091">
    <property type="entry name" value="AHR/AHRR"/>
</dbReference>
<dbReference type="InterPro" id="IPR033348">
    <property type="entry name" value="AHR_bHLH"/>
</dbReference>
<dbReference type="InterPro" id="IPR011598">
    <property type="entry name" value="bHLH_dom"/>
</dbReference>
<dbReference type="InterPro" id="IPR036638">
    <property type="entry name" value="HLH_DNA-bd_sf"/>
</dbReference>
<dbReference type="InterPro" id="IPR001610">
    <property type="entry name" value="PAC"/>
</dbReference>
<dbReference type="InterPro" id="IPR000014">
    <property type="entry name" value="PAS"/>
</dbReference>
<dbReference type="InterPro" id="IPR035965">
    <property type="entry name" value="PAS-like_dom_sf"/>
</dbReference>
<dbReference type="InterPro" id="IPR013767">
    <property type="entry name" value="PAS_fold"/>
</dbReference>
<dbReference type="InterPro" id="IPR013655">
    <property type="entry name" value="PAS_fold_3"/>
</dbReference>
<dbReference type="PANTHER" id="PTHR10649">
    <property type="entry name" value="ARYL HYDROCARBON RECEPTOR"/>
    <property type="match status" value="1"/>
</dbReference>
<dbReference type="PANTHER" id="PTHR10649:SF9">
    <property type="entry name" value="ARYL HYDROCARBON RECEPTOR"/>
    <property type="match status" value="1"/>
</dbReference>
<dbReference type="Pfam" id="PF00010">
    <property type="entry name" value="HLH"/>
    <property type="match status" value="1"/>
</dbReference>
<dbReference type="Pfam" id="PF00989">
    <property type="entry name" value="PAS"/>
    <property type="match status" value="1"/>
</dbReference>
<dbReference type="Pfam" id="PF08447">
    <property type="entry name" value="PAS_3"/>
    <property type="match status" value="1"/>
</dbReference>
<dbReference type="SMART" id="SM00353">
    <property type="entry name" value="HLH"/>
    <property type="match status" value="1"/>
</dbReference>
<dbReference type="SMART" id="SM00086">
    <property type="entry name" value="PAC"/>
    <property type="match status" value="1"/>
</dbReference>
<dbReference type="SMART" id="SM00091">
    <property type="entry name" value="PAS"/>
    <property type="match status" value="2"/>
</dbReference>
<dbReference type="SUPFAM" id="SSF47459">
    <property type="entry name" value="HLH, helix-loop-helix DNA-binding domain"/>
    <property type="match status" value="1"/>
</dbReference>
<dbReference type="SUPFAM" id="SSF55785">
    <property type="entry name" value="PYP-like sensor domain (PAS domain)"/>
    <property type="match status" value="2"/>
</dbReference>
<dbReference type="PROSITE" id="PS50888">
    <property type="entry name" value="BHLH"/>
    <property type="match status" value="1"/>
</dbReference>
<dbReference type="PROSITE" id="PS50112">
    <property type="entry name" value="PAS"/>
    <property type="match status" value="1"/>
</dbReference>
<comment type="function">
    <text evidence="2">Ligand-activated transcription factor that enables cells to adapt to changing conditions by sensing compounds from the environment, diet, microbiome and cellular metabolism, and which plays important roles in development, immunity and cancer. Upon ligand binding, translocates into the nucleus, where it heterodimerizes with ARNT and induces transcription by binding to xenobiotic response elements (XRE). Regulates a variety of biological processes, including angiogenesis, hematopoiesis, drug and lipid metabolism, cell motility and immune modulation. Xenobiotics can act as ligands: upon xenobiotic-binding, activates the expression of multiple phase I and II xenobiotic chemical metabolizing enzyme genes (such as the CYP1A1 gene). Mediates biochemical and toxic effects of halogenated aromatic hydrocarbons. Next to xenobiotics, natural ligands derived from plants, microbiota, and endogenous metabolism are potent AHR agonists. Tryptophan (Trp) derivatives constitute an important class of endogenous AHR ligands. Acts as a negative regulator of anti-tumor immunity: indoles and kynurenic acid generated by Trp catabolism act as ligand and activate AHR, thereby promoting AHR-driven cancer cell motility and suppressing adaptive immunity. Regulates the circadian clock by inhibiting the basal and circadian expression of the core circadian component PER1. Inhibits PER1 by repressing the CLOCK-BMAL1 heterodimer mediated transcriptional activation of PER1. The heterodimer ARNT:AHR binds to core DNA sequence 5'-TGCGTG-3' within the dioxin response element (DRE) of target gene promoters and activates their transcription.</text>
</comment>
<comment type="subunit">
    <text evidence="1 2">Homodimer (By similarity). Heterodimer; efficient DNA binding requires dimerization with another bHLH protein. Interacts with ARNT; the heterodimer ARNT:AHR binds to core DNA sequence 5'-TGCGTG-3' within the dioxin response element (DRE) of target gene promoters and activates their transcription (By similarity). Binds MYBBP1A (By similarity). Interacts with coactivators including SRC-1, RIP140 and NOCA7, and with the corepressor SMRT. Interacts with NEDD8 and IVNS1ABP (By similarity). Interacts with BMAL1. Interacts with HSP90AB1 (By similarity). Interacts with TIPARP; leading to mono-ADP-ribosylation of AHR and subsequent inhibition of AHR (By similarity).</text>
</comment>
<comment type="subcellular location">
    <subcellularLocation>
        <location evidence="1">Cytoplasm</location>
    </subcellularLocation>
    <subcellularLocation>
        <location evidence="1">Nucleus</location>
    </subcellularLocation>
    <text evidence="1">Initially cytoplasmic; upon binding with ligand and interaction with a HSP90, it translocates to the nucleus.</text>
</comment>
<comment type="domain">
    <text evidence="1">The PAS 1 domain is essential for dimerization and also required for AHR:ARNT heterodimerization.</text>
</comment>
<comment type="PTM">
    <text evidence="2">Mono-ADP-ribosylated, leading to inhibit transcription activator activity of AHR.</text>
</comment>
<keyword id="KW-0010">Activator</keyword>
<keyword id="KW-0013">ADP-ribosylation</keyword>
<keyword id="KW-0090">Biological rhythms</keyword>
<keyword id="KW-0131">Cell cycle</keyword>
<keyword id="KW-0963">Cytoplasm</keyword>
<keyword id="KW-0238">DNA-binding</keyword>
<keyword id="KW-0539">Nucleus</keyword>
<keyword id="KW-0675">Receptor</keyword>
<keyword id="KW-0677">Repeat</keyword>
<keyword id="KW-0678">Repressor</keyword>
<keyword id="KW-0804">Transcription</keyword>
<keyword id="KW-0805">Transcription regulation</keyword>
<protein>
    <recommendedName>
        <fullName>Aryl hydrocarbon receptor</fullName>
        <shortName>Ah receptor</shortName>
        <shortName>AhR</shortName>
    </recommendedName>
</protein>
<feature type="propeptide" id="PRO_0000013456" evidence="1">
    <location>
        <begin position="1"/>
        <end position="9"/>
    </location>
</feature>
<feature type="chain" id="PRO_0000013457" description="Aryl hydrocarbon receptor">
    <location>
        <begin position="10"/>
        <end position="848"/>
    </location>
</feature>
<feature type="domain" description="bHLH" evidence="4">
    <location>
        <begin position="26"/>
        <end position="79"/>
    </location>
</feature>
<feature type="domain" description="PAS 1" evidence="3 6">
    <location>
        <begin position="111"/>
        <end position="175"/>
    </location>
</feature>
<feature type="domain" description="PAS 2" evidence="3 6">
    <location>
        <begin position="266"/>
        <end position="336"/>
    </location>
</feature>
<feature type="domain" description="PAC" evidence="6">
    <location>
        <begin position="342"/>
        <end position="383"/>
    </location>
</feature>
<feature type="region of interest" description="Disordered" evidence="5">
    <location>
        <begin position="1"/>
        <end position="38"/>
    </location>
</feature>
<feature type="region of interest" description="DNA-binding" evidence="2">
    <location>
        <begin position="37"/>
        <end position="65"/>
    </location>
</feature>
<feature type="region of interest" description="Required for maintaining the overall integrity of the AHR:ARNT heterodimer and its transcriptional activity" evidence="2">
    <location>
        <begin position="49"/>
        <end position="81"/>
    </location>
</feature>
<feature type="region of interest" description="Required for maintaining the overall integrity of the AHR:ARNT heterodimer and its transcriptional activity" evidence="1">
    <location>
        <begin position="116"/>
        <end position="124"/>
    </location>
</feature>
<feature type="region of interest" description="Required for maintaining the overall integrity of the AHR:ARNT heterodimer and its transcriptional activity" evidence="1">
    <location>
        <begin position="260"/>
        <end position="262"/>
    </location>
</feature>
<feature type="region of interest" description="Disordered" evidence="5">
    <location>
        <begin position="421"/>
        <end position="449"/>
    </location>
</feature>
<feature type="short sequence motif" description="Nuclear localization signal 1" evidence="2">
    <location>
        <begin position="12"/>
        <end position="15"/>
    </location>
</feature>
<feature type="short sequence motif" description="Nuclear localization signal 2" evidence="2">
    <location>
        <begin position="36"/>
        <end position="41"/>
    </location>
</feature>
<feature type="short sequence motif" description="Nuclear export signal" evidence="2">
    <location>
        <begin position="63"/>
        <end position="71"/>
    </location>
</feature>
<feature type="compositionally biased region" description="Polar residues" evidence="5">
    <location>
        <begin position="436"/>
        <end position="449"/>
    </location>
</feature>
<evidence type="ECO:0000250" key="1">
    <source>
        <dbReference type="UniProtKB" id="P30561"/>
    </source>
</evidence>
<evidence type="ECO:0000250" key="2">
    <source>
        <dbReference type="UniProtKB" id="P35869"/>
    </source>
</evidence>
<evidence type="ECO:0000255" key="3">
    <source>
        <dbReference type="PROSITE-ProRule" id="PRU00140"/>
    </source>
</evidence>
<evidence type="ECO:0000255" key="4">
    <source>
        <dbReference type="PROSITE-ProRule" id="PRU00981"/>
    </source>
</evidence>
<evidence type="ECO:0000256" key="5">
    <source>
        <dbReference type="SAM" id="MobiDB-lite"/>
    </source>
</evidence>
<evidence type="ECO:0000305" key="6"/>
<evidence type="ECO:0000312" key="7">
    <source>
        <dbReference type="EMBL" id="AAL89730.1"/>
    </source>
</evidence>